<name>SDHD_ACIBT</name>
<accession>A3M3B1</accession>
<organism>
    <name type="scientific">Acinetobacter baumannii (strain ATCC 17978 / DSM 105126 / CIP 53.77 / LMG 1025 / NCDC KC755 / 5377)</name>
    <dbReference type="NCBI Taxonomy" id="400667"/>
    <lineage>
        <taxon>Bacteria</taxon>
        <taxon>Pseudomonadati</taxon>
        <taxon>Pseudomonadota</taxon>
        <taxon>Gammaproteobacteria</taxon>
        <taxon>Moraxellales</taxon>
        <taxon>Moraxellaceae</taxon>
        <taxon>Acinetobacter</taxon>
        <taxon>Acinetobacter calcoaceticus/baumannii complex</taxon>
    </lineage>
</organism>
<gene>
    <name evidence="1" type="primary">dsdA</name>
    <name type="ordered locus">A1S_0973</name>
</gene>
<proteinExistence type="inferred from homology"/>
<dbReference type="EC" id="4.3.1.18" evidence="1"/>
<dbReference type="EMBL" id="CP000521">
    <property type="protein sequence ID" value="ABO11405.2"/>
    <property type="molecule type" value="Genomic_DNA"/>
</dbReference>
<dbReference type="RefSeq" id="WP_000859906.1">
    <property type="nucleotide sequence ID" value="NZ_CP053098.1"/>
</dbReference>
<dbReference type="SMR" id="A3M3B1"/>
<dbReference type="KEGG" id="acb:A1S_0973"/>
<dbReference type="HOGENOM" id="CLU_035707_0_0_6"/>
<dbReference type="GO" id="GO:0008721">
    <property type="term" value="F:D-serine ammonia-lyase activity"/>
    <property type="evidence" value="ECO:0007669"/>
    <property type="project" value="UniProtKB-EC"/>
</dbReference>
<dbReference type="GO" id="GO:0016836">
    <property type="term" value="F:hydro-lyase activity"/>
    <property type="evidence" value="ECO:0007669"/>
    <property type="project" value="UniProtKB-UniRule"/>
</dbReference>
<dbReference type="GO" id="GO:0030170">
    <property type="term" value="F:pyridoxal phosphate binding"/>
    <property type="evidence" value="ECO:0007669"/>
    <property type="project" value="InterPro"/>
</dbReference>
<dbReference type="GO" id="GO:0036088">
    <property type="term" value="P:D-serine catabolic process"/>
    <property type="evidence" value="ECO:0007669"/>
    <property type="project" value="TreeGrafter"/>
</dbReference>
<dbReference type="GO" id="GO:0009097">
    <property type="term" value="P:isoleucine biosynthetic process"/>
    <property type="evidence" value="ECO:0007669"/>
    <property type="project" value="TreeGrafter"/>
</dbReference>
<dbReference type="CDD" id="cd06447">
    <property type="entry name" value="D-Ser-dehyd"/>
    <property type="match status" value="1"/>
</dbReference>
<dbReference type="FunFam" id="3.40.50.1100:FF:000018">
    <property type="entry name" value="D-serine dehydratase"/>
    <property type="match status" value="1"/>
</dbReference>
<dbReference type="Gene3D" id="3.40.50.1100">
    <property type="match status" value="2"/>
</dbReference>
<dbReference type="HAMAP" id="MF_01030">
    <property type="entry name" value="D_Ser_dehydrat"/>
    <property type="match status" value="1"/>
</dbReference>
<dbReference type="InterPro" id="IPR011780">
    <property type="entry name" value="D_Ser_am_lyase"/>
</dbReference>
<dbReference type="InterPro" id="IPR050147">
    <property type="entry name" value="Ser/Thr_Dehydratase"/>
</dbReference>
<dbReference type="InterPro" id="IPR000634">
    <property type="entry name" value="Ser/Thr_deHydtase_PyrdxlP-BS"/>
</dbReference>
<dbReference type="InterPro" id="IPR001926">
    <property type="entry name" value="TrpB-like_PALP"/>
</dbReference>
<dbReference type="InterPro" id="IPR036052">
    <property type="entry name" value="TrpB-like_PALP_sf"/>
</dbReference>
<dbReference type="NCBIfam" id="TIGR02035">
    <property type="entry name" value="D_Ser_am_lyase"/>
    <property type="match status" value="1"/>
</dbReference>
<dbReference type="NCBIfam" id="NF002823">
    <property type="entry name" value="PRK02991.1"/>
    <property type="match status" value="1"/>
</dbReference>
<dbReference type="PANTHER" id="PTHR48078:SF9">
    <property type="entry name" value="D-SERINE DEHYDRATASE"/>
    <property type="match status" value="1"/>
</dbReference>
<dbReference type="PANTHER" id="PTHR48078">
    <property type="entry name" value="THREONINE DEHYDRATASE, MITOCHONDRIAL-RELATED"/>
    <property type="match status" value="1"/>
</dbReference>
<dbReference type="Pfam" id="PF00291">
    <property type="entry name" value="PALP"/>
    <property type="match status" value="1"/>
</dbReference>
<dbReference type="SUPFAM" id="SSF53686">
    <property type="entry name" value="Tryptophan synthase beta subunit-like PLP-dependent enzymes"/>
    <property type="match status" value="1"/>
</dbReference>
<dbReference type="PROSITE" id="PS00165">
    <property type="entry name" value="DEHYDRATASE_SER_THR"/>
    <property type="match status" value="1"/>
</dbReference>
<protein>
    <recommendedName>
        <fullName evidence="1">Probable D-serine dehydratase</fullName>
        <ecNumber evidence="1">4.3.1.18</ecNumber>
    </recommendedName>
    <alternativeName>
        <fullName evidence="1">D-serine deaminase</fullName>
        <shortName evidence="1">DSD</shortName>
    </alternativeName>
</protein>
<reference key="1">
    <citation type="journal article" date="2007" name="Genes Dev.">
        <title>New insights into Acinetobacter baumannii pathogenesis revealed by high-density pyrosequencing and transposon mutagenesis.</title>
        <authorList>
            <person name="Smith M.G."/>
            <person name="Gianoulis T.A."/>
            <person name="Pukatzki S."/>
            <person name="Mekalanos J.J."/>
            <person name="Ornston L.N."/>
            <person name="Gerstein M."/>
            <person name="Snyder M."/>
        </authorList>
    </citation>
    <scope>NUCLEOTIDE SEQUENCE [LARGE SCALE GENOMIC DNA]</scope>
    <source>
        <strain>ATCC 17978 / DSM 105126 / CIP 53.77 / LMG 1025 / NCDC KC755 / 5377</strain>
    </source>
</reference>
<comment type="catalytic activity">
    <reaction evidence="1">
        <text>D-serine = pyruvate + NH4(+)</text>
        <dbReference type="Rhea" id="RHEA:13977"/>
        <dbReference type="ChEBI" id="CHEBI:15361"/>
        <dbReference type="ChEBI" id="CHEBI:28938"/>
        <dbReference type="ChEBI" id="CHEBI:35247"/>
        <dbReference type="EC" id="4.3.1.18"/>
    </reaction>
</comment>
<comment type="cofactor">
    <cofactor evidence="1">
        <name>pyridoxal 5'-phosphate</name>
        <dbReference type="ChEBI" id="CHEBI:597326"/>
    </cofactor>
</comment>
<comment type="similarity">
    <text evidence="1">Belongs to the serine/threonine dehydratase family. DsdA subfamily.</text>
</comment>
<keyword id="KW-0456">Lyase</keyword>
<keyword id="KW-0663">Pyridoxal phosphate</keyword>
<evidence type="ECO:0000255" key="1">
    <source>
        <dbReference type="HAMAP-Rule" id="MF_01030"/>
    </source>
</evidence>
<sequence>MKTVQLDQLKQQFPLIQTLQDYQETFWFNPHRYPLNEALAKVGLTEQDVKEAEARLARFAPYLAKVFPETQAQHGKIESALVKIADMQQALSLQKHKTLIGKLWLKKDSHLPISGSIKARGGIYEVLAHAEKLAIEAGLLKLEDDYSKLDQDSFRTFFSKYQIAVGSTGNLGLSIGIMSAKLGFRVSVHMSADARQWKKDKLRSLGVNVVEYASDYGVAVEEGRKAAEQDPFCFFIDDENSTTLFLGYAVAGLRLKQQFEQKQIKVDADHPLFVYLPCGVGGGPGGVSFGLKLAFGEHVHCIFAEPTHSPCMLLGVYTGLHDQISVNDIGLDNITAADGLAVGRASGFVGRAMQQLIDGYYTIHDECLYELIALLNQTENIQVEPSAAAGMMGPYYVQTTPDYLALHQLSAEKLQHATHVVWATGGGMVPPDEMQKYLTHSQSN</sequence>
<feature type="chain" id="PRO_1000213344" description="Probable D-serine dehydratase">
    <location>
        <begin position="1"/>
        <end position="444"/>
    </location>
</feature>
<feature type="modified residue" description="N6-(pyridoxal phosphate)lysine" evidence="1">
    <location>
        <position position="118"/>
    </location>
</feature>